<protein>
    <recommendedName>
        <fullName evidence="1">NADPH-dependent 7-cyano-7-deazaguanine reductase</fullName>
        <ecNumber evidence="1">1.7.1.13</ecNumber>
    </recommendedName>
    <alternativeName>
        <fullName evidence="1">7-cyano-7-carbaguanine reductase</fullName>
    </alternativeName>
    <alternativeName>
        <fullName evidence="1">NADPH-dependent nitrile oxidoreductase</fullName>
    </alternativeName>
    <alternativeName>
        <fullName evidence="1">PreQ(0) reductase</fullName>
    </alternativeName>
</protein>
<keyword id="KW-0963">Cytoplasm</keyword>
<keyword id="KW-0521">NADP</keyword>
<keyword id="KW-0560">Oxidoreductase</keyword>
<keyword id="KW-0671">Queuosine biosynthesis</keyword>
<feature type="chain" id="PRO_1000062380" description="NADPH-dependent 7-cyano-7-deazaguanine reductase">
    <location>
        <begin position="1"/>
        <end position="126"/>
    </location>
</feature>
<feature type="active site" description="Thioimide intermediate" evidence="1">
    <location>
        <position position="40"/>
    </location>
</feature>
<feature type="active site" description="Proton donor" evidence="1">
    <location>
        <position position="47"/>
    </location>
</feature>
<feature type="binding site" evidence="1">
    <location>
        <begin position="62"/>
        <end position="64"/>
    </location>
    <ligand>
        <name>substrate</name>
    </ligand>
</feature>
<feature type="binding site" evidence="1">
    <location>
        <begin position="81"/>
        <end position="82"/>
    </location>
    <ligand>
        <name>substrate</name>
    </ligand>
</feature>
<sequence length="126" mass="14925">MRYGEKEIKEFDVENMEIWPNDAKNDYIIKITLPEFMCCCPRSGYPDFATIYLEYMPDKFVIELKAIKLYINTFMYRNVSHEASINEIYNTLKDKLKPKWIKVVGDFNPRGNVHTVIECRSDMVVP</sequence>
<organism>
    <name type="scientific">Campylobacter jejuni subsp. doylei (strain ATCC BAA-1458 / RM4099 / 269.97)</name>
    <dbReference type="NCBI Taxonomy" id="360109"/>
    <lineage>
        <taxon>Bacteria</taxon>
        <taxon>Pseudomonadati</taxon>
        <taxon>Campylobacterota</taxon>
        <taxon>Epsilonproteobacteria</taxon>
        <taxon>Campylobacterales</taxon>
        <taxon>Campylobacteraceae</taxon>
        <taxon>Campylobacter</taxon>
    </lineage>
</organism>
<name>QUEF_CAMJD</name>
<accession>A7H668</accession>
<dbReference type="EC" id="1.7.1.13" evidence="1"/>
<dbReference type="EMBL" id="CP000768">
    <property type="protein sequence ID" value="ABS44279.1"/>
    <property type="molecule type" value="Genomic_DNA"/>
</dbReference>
<dbReference type="SMR" id="A7H668"/>
<dbReference type="KEGG" id="cjd:JJD26997_2097"/>
<dbReference type="HOGENOM" id="CLU_102489_1_1_7"/>
<dbReference type="UniPathway" id="UPA00392"/>
<dbReference type="Proteomes" id="UP000002302">
    <property type="component" value="Chromosome"/>
</dbReference>
<dbReference type="GO" id="GO:0005737">
    <property type="term" value="C:cytoplasm"/>
    <property type="evidence" value="ECO:0007669"/>
    <property type="project" value="UniProtKB-SubCell"/>
</dbReference>
<dbReference type="GO" id="GO:0033739">
    <property type="term" value="F:preQ1 synthase activity"/>
    <property type="evidence" value="ECO:0007669"/>
    <property type="project" value="UniProtKB-UniRule"/>
</dbReference>
<dbReference type="GO" id="GO:0008616">
    <property type="term" value="P:queuosine biosynthetic process"/>
    <property type="evidence" value="ECO:0007669"/>
    <property type="project" value="UniProtKB-UniRule"/>
</dbReference>
<dbReference type="GO" id="GO:0006400">
    <property type="term" value="P:tRNA modification"/>
    <property type="evidence" value="ECO:0007669"/>
    <property type="project" value="UniProtKB-UniRule"/>
</dbReference>
<dbReference type="Gene3D" id="3.30.1130.10">
    <property type="match status" value="1"/>
</dbReference>
<dbReference type="HAMAP" id="MF_00818">
    <property type="entry name" value="QueF_type1"/>
    <property type="match status" value="1"/>
</dbReference>
<dbReference type="InterPro" id="IPR043133">
    <property type="entry name" value="GTP-CH-I_C/QueF"/>
</dbReference>
<dbReference type="InterPro" id="IPR050084">
    <property type="entry name" value="NADPH_dep_7-cyano-7-deazaG_red"/>
</dbReference>
<dbReference type="InterPro" id="IPR029500">
    <property type="entry name" value="QueF"/>
</dbReference>
<dbReference type="InterPro" id="IPR016856">
    <property type="entry name" value="QueF_type1"/>
</dbReference>
<dbReference type="NCBIfam" id="TIGR03139">
    <property type="entry name" value="QueF-II"/>
    <property type="match status" value="1"/>
</dbReference>
<dbReference type="PANTHER" id="PTHR34354">
    <property type="entry name" value="NADPH-DEPENDENT 7-CYANO-7-DEAZAGUANINE REDUCTASE"/>
    <property type="match status" value="1"/>
</dbReference>
<dbReference type="PANTHER" id="PTHR34354:SF1">
    <property type="entry name" value="NADPH-DEPENDENT 7-CYANO-7-DEAZAGUANINE REDUCTASE"/>
    <property type="match status" value="1"/>
</dbReference>
<dbReference type="Pfam" id="PF14489">
    <property type="entry name" value="QueF"/>
    <property type="match status" value="1"/>
</dbReference>
<dbReference type="PIRSF" id="PIRSF027377">
    <property type="entry name" value="Nitrile_oxidored_QueF"/>
    <property type="match status" value="1"/>
</dbReference>
<dbReference type="SUPFAM" id="SSF55620">
    <property type="entry name" value="Tetrahydrobiopterin biosynthesis enzymes-like"/>
    <property type="match status" value="1"/>
</dbReference>
<comment type="function">
    <text evidence="1">Catalyzes the NADPH-dependent reduction of 7-cyano-7-deazaguanine (preQ0) to 7-aminomethyl-7-deazaguanine (preQ1).</text>
</comment>
<comment type="catalytic activity">
    <reaction evidence="1">
        <text>7-aminomethyl-7-carbaguanine + 2 NADP(+) = 7-cyano-7-deazaguanine + 2 NADPH + 3 H(+)</text>
        <dbReference type="Rhea" id="RHEA:13409"/>
        <dbReference type="ChEBI" id="CHEBI:15378"/>
        <dbReference type="ChEBI" id="CHEBI:45075"/>
        <dbReference type="ChEBI" id="CHEBI:57783"/>
        <dbReference type="ChEBI" id="CHEBI:58349"/>
        <dbReference type="ChEBI" id="CHEBI:58703"/>
        <dbReference type="EC" id="1.7.1.13"/>
    </reaction>
</comment>
<comment type="pathway">
    <text evidence="1">tRNA modification; tRNA-queuosine biosynthesis.</text>
</comment>
<comment type="subcellular location">
    <subcellularLocation>
        <location evidence="1">Cytoplasm</location>
    </subcellularLocation>
</comment>
<comment type="similarity">
    <text evidence="1">Belongs to the GTP cyclohydrolase I family. QueF type 1 subfamily.</text>
</comment>
<proteinExistence type="inferred from homology"/>
<reference key="1">
    <citation type="submission" date="2007-07" db="EMBL/GenBank/DDBJ databases">
        <title>Complete genome sequence of Campylobacter jejuni subsp doylei 269.97 isolated from human blood.</title>
        <authorList>
            <person name="Fouts D.E."/>
            <person name="Mongodin E.F."/>
            <person name="Puiu D."/>
            <person name="Sebastian Y."/>
            <person name="Miller W.G."/>
            <person name="Mandrell R.E."/>
            <person name="Lastovica A.J."/>
            <person name="Nelson K.E."/>
        </authorList>
    </citation>
    <scope>NUCLEOTIDE SEQUENCE [LARGE SCALE GENOMIC DNA]</scope>
    <source>
        <strain>ATCC BAA-1458 / RM4099 / 269.97</strain>
    </source>
</reference>
<evidence type="ECO:0000255" key="1">
    <source>
        <dbReference type="HAMAP-Rule" id="MF_00818"/>
    </source>
</evidence>
<gene>
    <name evidence="1" type="primary">queF</name>
    <name type="ordered locus">JJD26997_2097</name>
</gene>